<accession>P68032</accession>
<accession>P04270</accession>
<evidence type="ECO:0000250" key="1">
    <source>
        <dbReference type="UniProtKB" id="P60709"/>
    </source>
</evidence>
<evidence type="ECO:0000250" key="2">
    <source>
        <dbReference type="UniProtKB" id="P62737"/>
    </source>
</evidence>
<evidence type="ECO:0000250" key="3">
    <source>
        <dbReference type="UniProtKB" id="P68033"/>
    </source>
</evidence>
<evidence type="ECO:0000250" key="4">
    <source>
        <dbReference type="UniProtKB" id="P68135"/>
    </source>
</evidence>
<evidence type="ECO:0000250" key="5">
    <source>
        <dbReference type="UniProtKB" id="P68137"/>
    </source>
</evidence>
<evidence type="ECO:0000269" key="6">
    <source>
    </source>
</evidence>
<evidence type="ECO:0000269" key="7">
    <source>
    </source>
</evidence>
<evidence type="ECO:0000269" key="8">
    <source>
    </source>
</evidence>
<evidence type="ECO:0000269" key="9">
    <source>
    </source>
</evidence>
<evidence type="ECO:0000269" key="10">
    <source>
    </source>
</evidence>
<evidence type="ECO:0000269" key="11">
    <source>
    </source>
</evidence>
<evidence type="ECO:0000269" key="12">
    <source>
    </source>
</evidence>
<evidence type="ECO:0000269" key="13">
    <source>
    </source>
</evidence>
<evidence type="ECO:0000305" key="14"/>
<evidence type="ECO:0000305" key="15">
    <source>
    </source>
</evidence>
<evidence type="ECO:0000305" key="16">
    <source>
    </source>
</evidence>
<evidence type="ECO:0007829" key="17">
    <source>
        <dbReference type="PDB" id="8GT1"/>
    </source>
</evidence>
<evidence type="ECO:0007829" key="18">
    <source>
        <dbReference type="PDB" id="9B3R"/>
    </source>
</evidence>
<reference key="1">
    <citation type="journal article" date="1982" name="Proc. Natl. Acad. Sci. U.S.A.">
        <title>Molecular structure and evolutionary origin of human cardiac muscle actin gene.</title>
        <authorList>
            <person name="Hamada H."/>
            <person name="Petrino M.G."/>
            <person name="Kakunaga T."/>
        </authorList>
    </citation>
    <scope>NUCLEOTIDE SEQUENCE [GENOMIC DNA]</scope>
</reference>
<reference key="2">
    <citation type="submission" date="2004-06" db="EMBL/GenBank/DDBJ databases">
        <title>Cloning of human full open reading frames in Gateway(TM) system entry vector (pDONR201).</title>
        <authorList>
            <person name="Ebert L."/>
            <person name="Schick M."/>
            <person name="Neubert P."/>
            <person name="Schatten R."/>
            <person name="Henze S."/>
            <person name="Korn B."/>
        </authorList>
    </citation>
    <scope>NUCLEOTIDE SEQUENCE [LARGE SCALE MRNA]</scope>
</reference>
<reference key="3">
    <citation type="journal article" date="2004" name="Genome Res.">
        <title>The status, quality, and expansion of the NIH full-length cDNA project: the Mammalian Gene Collection (MGC).</title>
        <authorList>
            <consortium name="The MGC Project Team"/>
        </authorList>
    </citation>
    <scope>NUCLEOTIDE SEQUENCE [LARGE SCALE MRNA]</scope>
    <source>
        <tissue>Muscle</tissue>
    </source>
</reference>
<reference key="4">
    <citation type="journal article" date="2008" name="Proc. Natl. Acad. Sci. U.S.A.">
        <title>Connecting actin monomers by iso-peptide bond is a toxicity mechanism of the Vibrio cholerae MARTX toxin.</title>
        <authorList>
            <person name="Kudryashov D.S."/>
            <person name="Durer Z.A."/>
            <person name="Ytterberg A.J."/>
            <person name="Sawaya M.R."/>
            <person name="Pashkov I."/>
            <person name="Prochazkova K."/>
            <person name="Yeates T.O."/>
            <person name="Loo R.R."/>
            <person name="Loo J.A."/>
            <person name="Satchell K.J."/>
            <person name="Reisler E."/>
        </authorList>
    </citation>
    <scope>CROSS-LINK BY V.CHOLERAE TOXIN RTXA (MICROBIAL INFECTION)</scope>
</reference>
<reference key="5">
    <citation type="journal article" date="2013" name="Nat. Commun.">
        <title>ALKBH4-dependent demethylation of actin regulates actomyosin dynamics.</title>
        <authorList>
            <person name="Li M.M."/>
            <person name="Nilsen A."/>
            <person name="Shi Y."/>
            <person name="Fusser M."/>
            <person name="Ding Y.H."/>
            <person name="Fu Y."/>
            <person name="Liu B."/>
            <person name="Niu Y."/>
            <person name="Wu Y.S."/>
            <person name="Huang C.M."/>
            <person name="Olofsson M."/>
            <person name="Jin K.X."/>
            <person name="Lv Y."/>
            <person name="Xu X.Z."/>
            <person name="He C."/>
            <person name="Dong M.Q."/>
            <person name="Rendtlew Danielsen J.M."/>
            <person name="Klungland A."/>
            <person name="Yang Y.G."/>
        </authorList>
    </citation>
    <scope>METHYLATION AT LYS-86</scope>
    <scope>DEMETHYLATION BY ALKBH4</scope>
</reference>
<reference key="6">
    <citation type="journal article" date="2015" name="Science">
        <title>ACD toxin-produced actin oligomers poison formin-controlled actin polymerization.</title>
        <authorList>
            <person name="Heisler D.B."/>
            <person name="Kudryashova E."/>
            <person name="Grinevich D.O."/>
            <person name="Suarez C."/>
            <person name="Winkelman J.D."/>
            <person name="Birukov K.G."/>
            <person name="Kotha S.R."/>
            <person name="Parinandi N.L."/>
            <person name="Vavylonis D."/>
            <person name="Kovar D.R."/>
            <person name="Kudryashov D.S."/>
        </authorList>
    </citation>
    <scope>CROSS-LINK BY V.CHOLERAE TOXIN RTXA (MICROBIAL INFECTION)</scope>
</reference>
<reference key="7">
    <citation type="journal article" date="2019" name="Nature">
        <title>SETD3 is an actin histidine methyltransferase that prevents primary dystocia.</title>
        <authorList>
            <person name="Wilkinson A.W."/>
            <person name="Diep J."/>
            <person name="Dai S."/>
            <person name="Liu S."/>
            <person name="Ooi Y.S."/>
            <person name="Song D."/>
            <person name="Li T.M."/>
            <person name="Horton J.R."/>
            <person name="Zhang X."/>
            <person name="Liu C."/>
            <person name="Trivedi D.V."/>
            <person name="Ruppel K.M."/>
            <person name="Vilches-Moure J.G."/>
            <person name="Casey K.M."/>
            <person name="Mak J."/>
            <person name="Cowan T."/>
            <person name="Elias J.E."/>
            <person name="Nagamine C.M."/>
            <person name="Spudich J.A."/>
            <person name="Cheng X."/>
            <person name="Carette J.E."/>
            <person name="Gozani O."/>
        </authorList>
    </citation>
    <scope>METHYLATION AT HIS-75</scope>
</reference>
<reference key="8">
    <citation type="journal article" date="1998" name="Science">
        <title>Actin mutations in dilated cardiomyopathy, a heritable form of heart failure.</title>
        <authorList>
            <person name="Olson T.M."/>
            <person name="Michels V.V."/>
            <person name="Thibodeau S.N."/>
            <person name="Tai Y.-S."/>
            <person name="Keating M.T."/>
        </authorList>
    </citation>
    <scope>VARIANTS CMD1R HIS-314 AND GLY-363</scope>
</reference>
<reference key="9">
    <citation type="journal article" date="1999" name="J. Clin. Invest.">
        <title>Alpha-cardiac actin is a novel disease gene in familial hypertrophic cardiomyopathy.</title>
        <authorList>
            <person name="Mogensen J."/>
            <person name="Klausen I.C."/>
            <person name="Pedersen A.K."/>
            <person name="Egeblad H."/>
            <person name="Bross P."/>
            <person name="Kruse T.A."/>
            <person name="Gregersen N."/>
            <person name="Hansen P.S."/>
            <person name="Baandrup U."/>
            <person name="Boerglum A.D."/>
        </authorList>
    </citation>
    <scope>VARIANT CMH11 SER-297</scope>
</reference>
<reference key="10">
    <citation type="journal article" date="2000" name="J. Mol. Cell. Cardiol.">
        <title>Inherited and de novo mutations in the cardiac actin gene cause hypertrophic cardiomyopathy.</title>
        <authorList>
            <person name="Olson T.M."/>
            <person name="Doan T.P."/>
            <person name="Kishimoto N.Y."/>
            <person name="Whitby F.G."/>
            <person name="Ackerman M.J."/>
            <person name="Fananapazir L."/>
        </authorList>
    </citation>
    <scope>VARIANTS CMH11 LYS-101; ALA-166 AND PRO-333</scope>
</reference>
<reference key="11">
    <citation type="journal article" date="2004" name="J. Med. Genet.">
        <title>Clinical and genetic characteristics of alpha cardiac actin gene mutations in hypertrophic cardiomyopathy.</title>
        <authorList>
            <person name="Mogensen J."/>
            <person name="Perrot A."/>
            <person name="Andersen P.S."/>
            <person name="Havndrup O."/>
            <person name="Klausen I.C."/>
            <person name="Christiansen M."/>
            <person name="Bross P."/>
            <person name="Egeblad H."/>
            <person name="Bundgaard H."/>
            <person name="Osterziel K.J."/>
            <person name="Haltern G."/>
            <person name="Lapp H."/>
            <person name="Reinecke P."/>
            <person name="Gregersen N."/>
            <person name="Borglum A.D."/>
        </authorList>
    </citation>
    <scope>VARIANTS CMH11 CYS-168 AND LEU-307</scope>
</reference>
<reference key="12">
    <citation type="journal article" date="2008" name="Hum. Mol. Genet.">
        <title>Alpha-cardiac actin mutations produce atrial septal defects.</title>
        <authorList>
            <person name="Matsson H."/>
            <person name="Eason J."/>
            <person name="Bookwalter C.S."/>
            <person name="Klar J."/>
            <person name="Gustavsson P."/>
            <person name="Sunnegardh J."/>
            <person name="Enell H."/>
            <person name="Jonzon A."/>
            <person name="Vikkula M."/>
            <person name="Gutierrez I."/>
            <person name="Granados-Riveron J."/>
            <person name="Pope M."/>
            <person name="Bu'Lock F."/>
            <person name="Cox J."/>
            <person name="Robinson T.E."/>
            <person name="Song F."/>
            <person name="Brook D.J."/>
            <person name="Marston S."/>
            <person name="Trybus K.M."/>
            <person name="Dahl N."/>
        </authorList>
    </citation>
    <scope>VARIANT ASD5 VAL-125</scope>
    <scope>CHARACTERIZATION OF VARIANT ASD5 VAL-125</scope>
</reference>
<reference key="13">
    <citation type="journal article" date="2008" name="N. Engl. J. Med.">
        <title>Shared genetic causes of cardiac hypertrophy in children and adults.</title>
        <authorList>
            <person name="Morita H."/>
            <person name="Rehm H.L."/>
            <person name="Menesses A."/>
            <person name="McDonough B."/>
            <person name="Roberts A.E."/>
            <person name="Kucherlapati R."/>
            <person name="Towbin J.A."/>
            <person name="Seidman J.G."/>
            <person name="Seidman C.E."/>
        </authorList>
    </citation>
    <scope>VARIANTS CMH11 TYR-90 AND CYS-97</scope>
</reference>
<gene>
    <name type="primary">ACTC1</name>
    <name type="synonym">ACTC</name>
</gene>
<comment type="function">
    <text>Actins are highly conserved proteins that are involved in various types of cell motility and are ubiquitously expressed in all eukaryotic cells.</text>
</comment>
<comment type="catalytic activity">
    <reaction evidence="5">
        <text>ATP + H2O = ADP + phosphate + H(+)</text>
        <dbReference type="Rhea" id="RHEA:13065"/>
        <dbReference type="ChEBI" id="CHEBI:15377"/>
        <dbReference type="ChEBI" id="CHEBI:15378"/>
        <dbReference type="ChEBI" id="CHEBI:30616"/>
        <dbReference type="ChEBI" id="CHEBI:43474"/>
        <dbReference type="ChEBI" id="CHEBI:456216"/>
    </reaction>
</comment>
<comment type="subunit">
    <text>Polymerization of globular actin (G-actin) leads to a structural filament (F-actin) in the form of a two-stranded helix. Each actin can bind to 4 others.</text>
</comment>
<comment type="interaction">
    <interactant intactId="EBI-352273">
        <id>P68032</id>
    </interactant>
    <interactant intactId="EBI-352733">
        <id>P23528</id>
        <label>CFL1</label>
    </interactant>
    <organismsDiffer>false</organismsDiffer>
    <experiments>2</experiments>
</comment>
<comment type="subcellular location">
    <subcellularLocation>
        <location>Cytoplasm</location>
        <location>Cytoskeleton</location>
    </subcellularLocation>
</comment>
<comment type="PTM">
    <text evidence="3">Oxidation of Met-46 and Met-49 by MICALs (MICAL1, MICAL2 or MICAL3) to form methionine sulfoxide promotes actin filament depolymerization. MICAL1 and MICAL2 produce the (R)-S-oxide form. The (R)-S-oxide form is reverted by MSRB1 and MSRB2, which promotes actin repolymerization.</text>
</comment>
<comment type="PTM">
    <text evidence="11">Monomethylation at Lys-86 (K86me1) regulates actin-myosin interaction and actomyosin-dependent processes. Demethylation by ALKBH4 is required for maintaining actomyosin dynamics supporting normal cleavage furrow ingression during cytokinesis and cell migration.</text>
</comment>
<comment type="PTM">
    <molecule>Actin, alpha cardiac muscle 1, intermediate form</molecule>
    <text evidence="3">N-terminal cleavage of acetylated cysteine of intermediate muscle actin by ACTMAP.</text>
</comment>
<comment type="PTM">
    <text evidence="12">Methylated at His-75 by SETD3.</text>
</comment>
<comment type="PTM">
    <text evidence="15 16">(Microbial infection) Monomeric actin is cross-linked by V.cholerae toxins RtxA and VgrG1 in case of infection: bacterial toxins mediate the cross-link between Lys-52 of one monomer and Glu-272 of another actin monomer, resulting in formation of highly toxic actin oligomers that cause cell rounding (PubMed:19015515). The toxin can be highly efficient at very low concentrations by acting on formin homology family proteins: toxic actin oligomers bind with high affinity to formins and adversely affect both nucleation and elongation abilities of formins, causing their potent inhibition in both profilin-dependent and independent manners (PubMed:26228148).</text>
</comment>
<comment type="disease" evidence="13">
    <disease id="DI-00223">
        <name>Cardiomyopathy, dilated, 1R</name>
        <acronym>CMD1R</acronym>
        <description>A disorder characterized by ventricular dilation and impaired systolic function, resulting in congestive heart failure and arrhythmia. Patients are at risk of premature death.</description>
        <dbReference type="MIM" id="613424"/>
    </disease>
    <text>The disease is caused by variants affecting the gene represented in this entry.</text>
</comment>
<comment type="disease" evidence="6 7 8 10">
    <disease id="DI-00241">
        <name>Cardiomyopathy, familial hypertrophic, 11</name>
        <acronym>CMH11</acronym>
        <description>A hereditary heart disorder characterized by ventricular hypertrophy, which is usually asymmetric and often involves the interventricular septum. The symptoms include dyspnea, syncope, collapse, palpitations, and chest pain. They can be readily provoked by exercise. The disorder has inter- and intrafamilial variability ranging from benign to malignant forms with high risk of cardiac failure and sudden cardiac death.</description>
        <dbReference type="MIM" id="612098"/>
    </disease>
    <text>The disease is caused by variants affecting the gene represented in this entry.</text>
</comment>
<comment type="disease" evidence="9">
    <disease id="DI-02497">
        <name>Atrial septal defect 5</name>
        <acronym>ASD5</acronym>
        <description>A congenital heart malformation characterized by incomplete closure of the wall between the atria resulting in blood flow from the left to the right atria.</description>
        <dbReference type="MIM" id="612794"/>
    </disease>
    <text>The disease is caused by variants affecting the gene represented in this entry.</text>
</comment>
<comment type="miscellaneous">
    <text>In vertebrates 3 main groups of actin isoforms, alpha, beta and gamma have been identified. The alpha actins are found in muscle tissues and are a major constituent of the contractile apparatus. The beta and gamma actins coexist in most cell types as components of the cytoskeleton and as mediators of internal cell motility.</text>
</comment>
<comment type="similarity">
    <text evidence="14">Belongs to the actin family.</text>
</comment>
<sequence>MCDDEETTALVCDNGSGLVKAGFAGDDAPRAVFPSIVGRPRHQGVMVGMGQKDSYVGDEAQSKRGILTLKYPIEHGIITNWDDMEKIWHHTFYNELRVAPEEHPTLLTEAPLNPKANREKMTQIMFETFNVPAMYVAIQAVLSLYASGRTTGIVLDSGDGVTHNVPIYEGYALPHAIMRLDLAGRDLTDYLMKILTERGYSFVTTAEREIVRDIKEKLCYVALDFENEMATAASSSSLEKSYELPDGQVITIGNERFRCPETLFQPSFIGMESAGIHETTYNSIMKCDIDIRKDLYANNVLSGGTTMYPGIADRMQKEITALAPSTMKIKIIAPPERKYSVWIGGSILASLSTFQQMWISKQEYDEAGPSIVHRKCF</sequence>
<protein>
    <recommendedName>
        <fullName>Actin, alpha cardiac muscle 1</fullName>
        <ecNumber evidence="5">3.6.4.-</ecNumber>
    </recommendedName>
    <alternativeName>
        <fullName>Alpha-cardiac actin</fullName>
    </alternativeName>
    <component>
        <recommendedName>
            <fullName>Actin, alpha cardiac muscle 1, intermediate form</fullName>
        </recommendedName>
    </component>
</protein>
<dbReference type="EC" id="3.6.4.-" evidence="5"/>
<dbReference type="EMBL" id="J00073">
    <property type="protein sequence ID" value="AAB59619.1"/>
    <property type="molecule type" value="Genomic_DNA"/>
</dbReference>
<dbReference type="EMBL" id="J00070">
    <property type="protein sequence ID" value="AAB59619.1"/>
    <property type="status" value="JOINED"/>
    <property type="molecule type" value="Genomic_DNA"/>
</dbReference>
<dbReference type="EMBL" id="J00071">
    <property type="protein sequence ID" value="AAB59619.1"/>
    <property type="status" value="JOINED"/>
    <property type="molecule type" value="Genomic_DNA"/>
</dbReference>
<dbReference type="EMBL" id="J00072">
    <property type="protein sequence ID" value="AAB59619.1"/>
    <property type="status" value="JOINED"/>
    <property type="molecule type" value="Genomic_DNA"/>
</dbReference>
<dbReference type="EMBL" id="CR541795">
    <property type="protein sequence ID" value="CAG46594.1"/>
    <property type="molecule type" value="mRNA"/>
</dbReference>
<dbReference type="EMBL" id="BC009978">
    <property type="protein sequence ID" value="AAH09978.1"/>
    <property type="molecule type" value="mRNA"/>
</dbReference>
<dbReference type="CCDS" id="CCDS10041.1"/>
<dbReference type="PIR" id="A02998">
    <property type="entry name" value="ATHUC"/>
</dbReference>
<dbReference type="RefSeq" id="NP_001393411.1">
    <property type="nucleotide sequence ID" value="NM_001406482.1"/>
</dbReference>
<dbReference type="RefSeq" id="NP_001393412.1">
    <property type="nucleotide sequence ID" value="NM_001406483.1"/>
</dbReference>
<dbReference type="RefSeq" id="NP_005150.1">
    <property type="nucleotide sequence ID" value="NM_005159.5"/>
</dbReference>
<dbReference type="RefSeq" id="XP_047288935.1">
    <property type="nucleotide sequence ID" value="XM_047432979.1"/>
</dbReference>
<dbReference type="PDB" id="8GSU">
    <property type="method" value="X-ray"/>
    <property type="resolution" value="1.50 A"/>
    <property type="chains" value="A=3-377"/>
</dbReference>
<dbReference type="PDB" id="8GSW">
    <property type="method" value="X-ray"/>
    <property type="resolution" value="1.40 A"/>
    <property type="chains" value="A=3-377"/>
</dbReference>
<dbReference type="PDB" id="8GT1">
    <property type="method" value="X-ray"/>
    <property type="resolution" value="1.35 A"/>
    <property type="chains" value="A=3-377"/>
</dbReference>
<dbReference type="PDB" id="8GT2">
    <property type="method" value="X-ray"/>
    <property type="resolution" value="1.50 A"/>
    <property type="chains" value="A=3-377"/>
</dbReference>
<dbReference type="PDB" id="8GT3">
    <property type="method" value="X-ray"/>
    <property type="resolution" value="1.50 A"/>
    <property type="chains" value="A=3-377"/>
</dbReference>
<dbReference type="PDB" id="8GT4">
    <property type="method" value="X-ray"/>
    <property type="resolution" value="1.55 A"/>
    <property type="chains" value="A=3-377"/>
</dbReference>
<dbReference type="PDB" id="8GT5">
    <property type="method" value="X-ray"/>
    <property type="resolution" value="1.40 A"/>
    <property type="chains" value="A=3-377"/>
</dbReference>
<dbReference type="PDB" id="8ZB7">
    <property type="method" value="EM"/>
    <property type="resolution" value="3.19 A"/>
    <property type="chains" value="A/B/C/D/E/F=7-377"/>
</dbReference>
<dbReference type="PDB" id="8ZI9">
    <property type="method" value="EM"/>
    <property type="resolution" value="3.08 A"/>
    <property type="chains" value="F=7-377"/>
</dbReference>
<dbReference type="PDB" id="8ZJ1">
    <property type="method" value="EM"/>
    <property type="resolution" value="4.25 A"/>
    <property type="chains" value="A/C/D/E/F=7-377"/>
</dbReference>
<dbReference type="PDB" id="9B3Q">
    <property type="method" value="EM"/>
    <property type="resolution" value="3.60 A"/>
    <property type="chains" value="A/D/E=1-377"/>
</dbReference>
<dbReference type="PDB" id="9B3R">
    <property type="method" value="EM"/>
    <property type="resolution" value="3.50 A"/>
    <property type="chains" value="A/D/E=1-377"/>
</dbReference>
<dbReference type="PDBsum" id="8GSU"/>
<dbReference type="PDBsum" id="8GSW"/>
<dbReference type="PDBsum" id="8GT1"/>
<dbReference type="PDBsum" id="8GT2"/>
<dbReference type="PDBsum" id="8GT3"/>
<dbReference type="PDBsum" id="8GT4"/>
<dbReference type="PDBsum" id="8GT5"/>
<dbReference type="PDBsum" id="8ZB7"/>
<dbReference type="PDBsum" id="8ZI9"/>
<dbReference type="PDBsum" id="8ZJ1"/>
<dbReference type="PDBsum" id="9B3Q"/>
<dbReference type="PDBsum" id="9B3R"/>
<dbReference type="EMDB" id="EMD-39896"/>
<dbReference type="EMDB" id="EMD-44153"/>
<dbReference type="EMDB" id="EMD-44154"/>
<dbReference type="EMDB" id="EMD-60122"/>
<dbReference type="EMDB" id="EMD-60135"/>
<dbReference type="SMR" id="P68032"/>
<dbReference type="BioGRID" id="106585">
    <property type="interactions" value="681"/>
</dbReference>
<dbReference type="FunCoup" id="P68032">
    <property type="interactions" value="966"/>
</dbReference>
<dbReference type="IntAct" id="P68032">
    <property type="interactions" value="105"/>
</dbReference>
<dbReference type="MINT" id="P68032"/>
<dbReference type="STRING" id="9606.ENSP00000290378"/>
<dbReference type="GlyGen" id="P68032">
    <property type="glycosylation" value="3 sites, 1 N-linked glycan (1 site), 1 O-linked glycan (2 sites)"/>
</dbReference>
<dbReference type="iPTMnet" id="P68032"/>
<dbReference type="MetOSite" id="P68032"/>
<dbReference type="PhosphoSitePlus" id="P68032"/>
<dbReference type="SwissPalm" id="P68032"/>
<dbReference type="BioMuta" id="ACTC1"/>
<dbReference type="DMDM" id="54036697"/>
<dbReference type="REPRODUCTION-2DPAGE" id="P68032"/>
<dbReference type="jPOST" id="P68032"/>
<dbReference type="MassIVE" id="P68032"/>
<dbReference type="PaxDb" id="9606-ENSP00000290378"/>
<dbReference type="PeptideAtlas" id="P68032"/>
<dbReference type="PRIDE" id="P68032"/>
<dbReference type="ProteomicsDB" id="57527"/>
<dbReference type="Pumba" id="P68032"/>
<dbReference type="TopDownProteomics" id="P68032"/>
<dbReference type="Antibodypedia" id="9782">
    <property type="antibodies" value="333 antibodies from 36 providers"/>
</dbReference>
<dbReference type="DNASU" id="70"/>
<dbReference type="Ensembl" id="ENST00000290378.6">
    <property type="protein sequence ID" value="ENSP00000290378.4"/>
    <property type="gene ID" value="ENSG00000159251.10"/>
</dbReference>
<dbReference type="Ensembl" id="ENST00000713610.1">
    <property type="protein sequence ID" value="ENSP00000518905.1"/>
    <property type="gene ID" value="ENSG00000159251.10"/>
</dbReference>
<dbReference type="Ensembl" id="ENST00000713615.1">
    <property type="protein sequence ID" value="ENSP00000518911.1"/>
    <property type="gene ID" value="ENSG00000159251.10"/>
</dbReference>
<dbReference type="GeneID" id="70"/>
<dbReference type="KEGG" id="hsa:70"/>
<dbReference type="MANE-Select" id="ENST00000290378.6">
    <property type="protein sequence ID" value="ENSP00000290378.4"/>
    <property type="RefSeq nucleotide sequence ID" value="NM_005159.5"/>
    <property type="RefSeq protein sequence ID" value="NP_005150.1"/>
</dbReference>
<dbReference type="UCSC" id="uc001ziu.2">
    <property type="organism name" value="human"/>
</dbReference>
<dbReference type="AGR" id="HGNC:143"/>
<dbReference type="CTD" id="70"/>
<dbReference type="DisGeNET" id="70"/>
<dbReference type="GeneCards" id="ACTC1"/>
<dbReference type="GeneReviews" id="ACTC1"/>
<dbReference type="HGNC" id="HGNC:143">
    <property type="gene designation" value="ACTC1"/>
</dbReference>
<dbReference type="HPA" id="ENSG00000159251">
    <property type="expression patterns" value="Tissue enriched (heart)"/>
</dbReference>
<dbReference type="MalaCards" id="ACTC1"/>
<dbReference type="MIM" id="102540">
    <property type="type" value="gene"/>
</dbReference>
<dbReference type="MIM" id="612098">
    <property type="type" value="phenotype"/>
</dbReference>
<dbReference type="MIM" id="612794">
    <property type="type" value="phenotype"/>
</dbReference>
<dbReference type="MIM" id="613424">
    <property type="type" value="phenotype"/>
</dbReference>
<dbReference type="neXtProt" id="NX_P68032"/>
<dbReference type="OpenTargets" id="ENSG00000159251"/>
<dbReference type="Orphanet" id="99103">
    <property type="disease" value="Atrial septal defect, ostium secundum type"/>
</dbReference>
<dbReference type="Orphanet" id="154">
    <property type="disease" value="Familial isolated dilated cardiomyopathy"/>
</dbReference>
<dbReference type="Orphanet" id="54260">
    <property type="disease" value="Left ventricular noncompaction"/>
</dbReference>
<dbReference type="PharmGKB" id="PA162375571"/>
<dbReference type="VEuPathDB" id="HostDB:ENSG00000159251"/>
<dbReference type="eggNOG" id="KOG0676">
    <property type="taxonomic scope" value="Eukaryota"/>
</dbReference>
<dbReference type="GeneTree" id="ENSGT00940000154710"/>
<dbReference type="HOGENOM" id="CLU_027965_0_2_1"/>
<dbReference type="InParanoid" id="P68032"/>
<dbReference type="OMA" id="FTTSAEF"/>
<dbReference type="OrthoDB" id="9816491at2759"/>
<dbReference type="PAN-GO" id="P68032">
    <property type="GO annotations" value="7 GO annotations based on evolutionary models"/>
</dbReference>
<dbReference type="PhylomeDB" id="P68032"/>
<dbReference type="TreeFam" id="TF354237"/>
<dbReference type="PathwayCommons" id="P68032"/>
<dbReference type="Reactome" id="R-HSA-390522">
    <property type="pathway name" value="Striated Muscle Contraction"/>
</dbReference>
<dbReference type="Reactome" id="R-HSA-8980692">
    <property type="pathway name" value="RHOA GTPase cycle"/>
</dbReference>
<dbReference type="Reactome" id="R-HSA-9013026">
    <property type="pathway name" value="RHOB GTPase cycle"/>
</dbReference>
<dbReference type="Reactome" id="R-HSA-9913351">
    <property type="pathway name" value="Formation of the dystrophin-glycoprotein complex (DGC)"/>
</dbReference>
<dbReference type="SignaLink" id="P68032"/>
<dbReference type="SIGNOR" id="P68032"/>
<dbReference type="BioGRID-ORCS" id="70">
    <property type="hits" value="7 hits in 1146 CRISPR screens"/>
</dbReference>
<dbReference type="CD-CODE" id="DEE660B4">
    <property type="entry name" value="Stress granule"/>
</dbReference>
<dbReference type="ChiTaRS" id="ACTC1">
    <property type="organism name" value="human"/>
</dbReference>
<dbReference type="GeneWiki" id="ACTC1"/>
<dbReference type="GenomeRNAi" id="70"/>
<dbReference type="Pharos" id="P68032">
    <property type="development level" value="Tbio"/>
</dbReference>
<dbReference type="PRO" id="PR:P68032"/>
<dbReference type="Proteomes" id="UP000005640">
    <property type="component" value="Chromosome 15"/>
</dbReference>
<dbReference type="RNAct" id="P68032">
    <property type="molecule type" value="protein"/>
</dbReference>
<dbReference type="Bgee" id="ENSG00000159251">
    <property type="expression patterns" value="Expressed in left ventricle myocardium and 156 other cell types or tissues"/>
</dbReference>
<dbReference type="GO" id="GO:0015629">
    <property type="term" value="C:actin cytoskeleton"/>
    <property type="evidence" value="ECO:0000318"/>
    <property type="project" value="GO_Central"/>
</dbReference>
<dbReference type="GO" id="GO:0005884">
    <property type="term" value="C:actin filament"/>
    <property type="evidence" value="ECO:0000314"/>
    <property type="project" value="UniProtKB"/>
</dbReference>
<dbReference type="GO" id="GO:0072562">
    <property type="term" value="C:blood microparticle"/>
    <property type="evidence" value="ECO:0007005"/>
    <property type="project" value="UniProtKB"/>
</dbReference>
<dbReference type="GO" id="GO:0044297">
    <property type="term" value="C:cell body"/>
    <property type="evidence" value="ECO:0000250"/>
    <property type="project" value="AgBase"/>
</dbReference>
<dbReference type="GO" id="GO:0005737">
    <property type="term" value="C:cytoplasm"/>
    <property type="evidence" value="ECO:0000314"/>
    <property type="project" value="BHF-UCL"/>
</dbReference>
<dbReference type="GO" id="GO:0005829">
    <property type="term" value="C:cytosol"/>
    <property type="evidence" value="ECO:0000304"/>
    <property type="project" value="Reactome"/>
</dbReference>
<dbReference type="GO" id="GO:0070062">
    <property type="term" value="C:extracellular exosome"/>
    <property type="evidence" value="ECO:0007005"/>
    <property type="project" value="UniProtKB"/>
</dbReference>
<dbReference type="GO" id="GO:0005615">
    <property type="term" value="C:extracellular space"/>
    <property type="evidence" value="ECO:0007005"/>
    <property type="project" value="UniProtKB"/>
</dbReference>
<dbReference type="GO" id="GO:0030175">
    <property type="term" value="C:filopodium"/>
    <property type="evidence" value="ECO:0000250"/>
    <property type="project" value="AgBase"/>
</dbReference>
<dbReference type="GO" id="GO:0005925">
    <property type="term" value="C:focal adhesion"/>
    <property type="evidence" value="ECO:0007005"/>
    <property type="project" value="UniProtKB"/>
</dbReference>
<dbReference type="GO" id="GO:0098978">
    <property type="term" value="C:glutamatergic synapse"/>
    <property type="evidence" value="ECO:0007669"/>
    <property type="project" value="Ensembl"/>
</dbReference>
<dbReference type="GO" id="GO:0031674">
    <property type="term" value="C:I band"/>
    <property type="evidence" value="ECO:0000250"/>
    <property type="project" value="UniProtKB"/>
</dbReference>
<dbReference type="GO" id="GO:0030027">
    <property type="term" value="C:lamellipodium"/>
    <property type="evidence" value="ECO:0000250"/>
    <property type="project" value="AgBase"/>
</dbReference>
<dbReference type="GO" id="GO:0016020">
    <property type="term" value="C:membrane"/>
    <property type="evidence" value="ECO:0007005"/>
    <property type="project" value="UniProtKB"/>
</dbReference>
<dbReference type="GO" id="GO:0030017">
    <property type="term" value="C:sarcomere"/>
    <property type="evidence" value="ECO:0000314"/>
    <property type="project" value="UniProtKB"/>
</dbReference>
<dbReference type="GO" id="GO:0005524">
    <property type="term" value="F:ATP binding"/>
    <property type="evidence" value="ECO:0000314"/>
    <property type="project" value="UniProtKB"/>
</dbReference>
<dbReference type="GO" id="GO:0016787">
    <property type="term" value="F:hydrolase activity"/>
    <property type="evidence" value="ECO:0007669"/>
    <property type="project" value="UniProtKB-KW"/>
</dbReference>
<dbReference type="GO" id="GO:0000146">
    <property type="term" value="F:microfilament motor activity"/>
    <property type="evidence" value="ECO:0000314"/>
    <property type="project" value="UniProtKB"/>
</dbReference>
<dbReference type="GO" id="GO:0017022">
    <property type="term" value="F:myosin binding"/>
    <property type="evidence" value="ECO:0000314"/>
    <property type="project" value="BHF-UCL"/>
</dbReference>
<dbReference type="GO" id="GO:0007015">
    <property type="term" value="P:actin filament organization"/>
    <property type="evidence" value="ECO:0000318"/>
    <property type="project" value="GO_Central"/>
</dbReference>
<dbReference type="GO" id="GO:0030048">
    <property type="term" value="P:actin filament-based movement"/>
    <property type="evidence" value="ECO:0000314"/>
    <property type="project" value="UniProtKB"/>
</dbReference>
<dbReference type="GO" id="GO:0033275">
    <property type="term" value="P:actin-myosin filament sliding"/>
    <property type="evidence" value="ECO:0000315"/>
    <property type="project" value="BHF-UCL"/>
</dbReference>
<dbReference type="GO" id="GO:0031032">
    <property type="term" value="P:actomyosin structure organization"/>
    <property type="evidence" value="ECO:0000250"/>
    <property type="project" value="UniProtKB"/>
</dbReference>
<dbReference type="GO" id="GO:0060048">
    <property type="term" value="P:cardiac muscle contraction"/>
    <property type="evidence" value="ECO:0007669"/>
    <property type="project" value="Ensembl"/>
</dbReference>
<dbReference type="GO" id="GO:0055008">
    <property type="term" value="P:cardiac muscle tissue morphogenesis"/>
    <property type="evidence" value="ECO:0000250"/>
    <property type="project" value="UniProtKB"/>
</dbReference>
<dbReference type="GO" id="GO:0055003">
    <property type="term" value="P:cardiac myofibril assembly"/>
    <property type="evidence" value="ECO:0000250"/>
    <property type="project" value="UniProtKB"/>
</dbReference>
<dbReference type="GO" id="GO:0060047">
    <property type="term" value="P:heart contraction"/>
    <property type="evidence" value="ECO:0000315"/>
    <property type="project" value="UniProtKB"/>
</dbReference>
<dbReference type="GO" id="GO:0090131">
    <property type="term" value="P:mesenchyme migration"/>
    <property type="evidence" value="ECO:0000250"/>
    <property type="project" value="AgBase"/>
</dbReference>
<dbReference type="GO" id="GO:0043066">
    <property type="term" value="P:negative regulation of apoptotic process"/>
    <property type="evidence" value="ECO:0007669"/>
    <property type="project" value="Ensembl"/>
</dbReference>
<dbReference type="GO" id="GO:0010628">
    <property type="term" value="P:positive regulation of gene expression"/>
    <property type="evidence" value="ECO:0000250"/>
    <property type="project" value="AgBase"/>
</dbReference>
<dbReference type="GO" id="GO:0045471">
    <property type="term" value="P:response to ethanol"/>
    <property type="evidence" value="ECO:0007669"/>
    <property type="project" value="Ensembl"/>
</dbReference>
<dbReference type="GO" id="GO:0009410">
    <property type="term" value="P:response to xenobiotic stimulus"/>
    <property type="evidence" value="ECO:0007669"/>
    <property type="project" value="Ensembl"/>
</dbReference>
<dbReference type="GO" id="GO:0030240">
    <property type="term" value="P:skeletal muscle thin filament assembly"/>
    <property type="evidence" value="ECO:0000250"/>
    <property type="project" value="UniProtKB"/>
</dbReference>
<dbReference type="CDD" id="cd10224">
    <property type="entry name" value="ASKHA_NBD_actin"/>
    <property type="match status" value="1"/>
</dbReference>
<dbReference type="FunFam" id="3.30.420.40:FF:000131">
    <property type="entry name" value="Actin, alpha skeletal muscle"/>
    <property type="match status" value="1"/>
</dbReference>
<dbReference type="FunFam" id="3.30.420.40:FF:000291">
    <property type="entry name" value="Actin, alpha skeletal muscle"/>
    <property type="match status" value="1"/>
</dbReference>
<dbReference type="FunFam" id="3.90.640.10:FF:000047">
    <property type="entry name" value="Actin, alpha skeletal muscle"/>
    <property type="match status" value="1"/>
</dbReference>
<dbReference type="FunFam" id="3.30.420.40:FF:000058">
    <property type="entry name" value="Putative actin-related protein 5"/>
    <property type="match status" value="1"/>
</dbReference>
<dbReference type="Gene3D" id="3.30.420.40">
    <property type="match status" value="2"/>
</dbReference>
<dbReference type="Gene3D" id="3.90.640.10">
    <property type="entry name" value="Actin, Chain A, domain 4"/>
    <property type="match status" value="1"/>
</dbReference>
<dbReference type="InterPro" id="IPR004000">
    <property type="entry name" value="Actin"/>
</dbReference>
<dbReference type="InterPro" id="IPR020902">
    <property type="entry name" value="Actin/actin-like_CS"/>
</dbReference>
<dbReference type="InterPro" id="IPR004001">
    <property type="entry name" value="Actin_CS"/>
</dbReference>
<dbReference type="InterPro" id="IPR043129">
    <property type="entry name" value="ATPase_NBD"/>
</dbReference>
<dbReference type="PANTHER" id="PTHR11937">
    <property type="entry name" value="ACTIN"/>
    <property type="match status" value="1"/>
</dbReference>
<dbReference type="Pfam" id="PF00022">
    <property type="entry name" value="Actin"/>
    <property type="match status" value="1"/>
</dbReference>
<dbReference type="PRINTS" id="PR00190">
    <property type="entry name" value="ACTIN"/>
</dbReference>
<dbReference type="SMART" id="SM00268">
    <property type="entry name" value="ACTIN"/>
    <property type="match status" value="1"/>
</dbReference>
<dbReference type="SUPFAM" id="SSF53067">
    <property type="entry name" value="Actin-like ATPase domain"/>
    <property type="match status" value="2"/>
</dbReference>
<dbReference type="PROSITE" id="PS00406">
    <property type="entry name" value="ACTINS_1"/>
    <property type="match status" value="1"/>
</dbReference>
<dbReference type="PROSITE" id="PS00432">
    <property type="entry name" value="ACTINS_2"/>
    <property type="match status" value="1"/>
</dbReference>
<dbReference type="PROSITE" id="PS01132">
    <property type="entry name" value="ACTINS_ACT_LIKE"/>
    <property type="match status" value="1"/>
</dbReference>
<feature type="initiator methionine" description="Removed">
    <location>
        <position position="1"/>
    </location>
</feature>
<feature type="chain" id="PRO_0000442998" description="Actin, alpha cardiac muscle 1, intermediate form" evidence="2">
    <location>
        <begin position="2"/>
        <end position="377"/>
    </location>
</feature>
<feature type="chain" id="PRO_0000000813" description="Actin, alpha cardiac muscle 1" evidence="4">
    <location>
        <begin position="3"/>
        <end position="377"/>
    </location>
</feature>
<feature type="modified residue" description="N-acetylcysteine; in intermediate form" evidence="2">
    <location>
        <position position="2"/>
    </location>
</feature>
<feature type="modified residue" description="Methionine (R)-sulfoxide" evidence="3">
    <location>
        <position position="46"/>
    </location>
</feature>
<feature type="modified residue" description="Methionine (R)-sulfoxide" evidence="3">
    <location>
        <position position="49"/>
    </location>
</feature>
<feature type="modified residue" description="Tele-methylhistidine" evidence="12">
    <location>
        <position position="75"/>
    </location>
</feature>
<feature type="modified residue" description="N6-methyllysine" evidence="11">
    <location>
        <position position="86"/>
    </location>
</feature>
<feature type="cross-link" description="Isoglutamyl lysine isopeptide (Lys-Glu) (interchain with E-272); by Vibrio toxins RtxA and VgrG1" evidence="1">
    <location>
        <position position="52"/>
    </location>
</feature>
<feature type="cross-link" description="Isoglutamyl lysine isopeptide (Glu-Lys) (interchain with K-52); by Vibrio toxins RtxA and VgrG1" evidence="1">
    <location>
        <position position="272"/>
    </location>
</feature>
<feature type="sequence variant" id="VAR_045924" description="In CMH11; dbSNP:rs121912676." evidence="10">
    <original>H</original>
    <variation>Y</variation>
    <location>
        <position position="90"/>
    </location>
</feature>
<feature type="sequence variant" id="VAR_045925" description="In CMH11; dbSNP:rs759495229." evidence="10">
    <original>R</original>
    <variation>C</variation>
    <location>
        <position position="97"/>
    </location>
</feature>
<feature type="sequence variant" id="VAR_012857" description="In CMH11; dbSNP:rs193922680." evidence="7">
    <original>E</original>
    <variation>K</variation>
    <location>
        <position position="101"/>
    </location>
</feature>
<feature type="sequence variant" id="VAR_046502" description="In ASD5; reduced affinity for myosin; normal actin filament polymerization ability; normal actomyosin motor function; dbSNP:rs121912677." evidence="9">
    <original>M</original>
    <variation>V</variation>
    <location>
        <position position="125"/>
    </location>
</feature>
<feature type="sequence variant" id="VAR_012858" description="In CMH11; dbSNP:rs267606628." evidence="7">
    <original>P</original>
    <variation>A</variation>
    <location>
        <position position="166"/>
    </location>
</feature>
<feature type="sequence variant" id="VAR_046503" description="In CMH11; dbSNP:rs2140430974." evidence="8">
    <original>Y</original>
    <variation>C</variation>
    <location>
        <position position="168"/>
    </location>
</feature>
<feature type="sequence variant" id="VAR_012859" description="In CMH11; dbSNP:rs121912675." evidence="6">
    <original>A</original>
    <variation>S</variation>
    <location>
        <position position="297"/>
    </location>
</feature>
<feature type="sequence variant" id="VAR_046504" description="In CMH11; dbSNP:rs2140429593." evidence="8">
    <original>M</original>
    <variation>L</variation>
    <location>
        <position position="307"/>
    </location>
</feature>
<feature type="sequence variant" id="VAR_012860" description="In CMD1R; dbSNP:rs121912673." evidence="13">
    <original>R</original>
    <variation>H</variation>
    <location>
        <position position="314"/>
    </location>
</feature>
<feature type="sequence variant" id="VAR_012861" description="In CMH11; dbSNP:rs267606629." evidence="7">
    <original>A</original>
    <variation>P</variation>
    <location>
        <position position="333"/>
    </location>
</feature>
<feature type="sequence variant" id="VAR_012862" description="In CMD1R; dbSNP:rs121912674." evidence="13">
    <original>E</original>
    <variation>G</variation>
    <location>
        <position position="363"/>
    </location>
</feature>
<feature type="strand" evidence="17">
    <location>
        <begin position="10"/>
        <end position="14"/>
    </location>
</feature>
<feature type="strand" evidence="17">
    <location>
        <begin position="16"/>
        <end position="23"/>
    </location>
</feature>
<feature type="strand" evidence="17">
    <location>
        <begin position="26"/>
        <end position="28"/>
    </location>
</feature>
<feature type="strand" evidence="17">
    <location>
        <begin position="30"/>
        <end position="34"/>
    </location>
</feature>
<feature type="strand" evidence="17">
    <location>
        <begin position="37"/>
        <end position="41"/>
    </location>
</feature>
<feature type="helix" evidence="17">
    <location>
        <begin position="58"/>
        <end position="62"/>
    </location>
</feature>
<feature type="turn" evidence="17">
    <location>
        <begin position="63"/>
        <end position="65"/>
    </location>
</feature>
<feature type="strand" evidence="17">
    <location>
        <begin position="66"/>
        <end position="70"/>
    </location>
</feature>
<feature type="strand" evidence="17">
    <location>
        <begin position="72"/>
        <end position="74"/>
    </location>
</feature>
<feature type="helix" evidence="17">
    <location>
        <begin position="81"/>
        <end position="93"/>
    </location>
</feature>
<feature type="turn" evidence="17">
    <location>
        <begin position="94"/>
        <end position="96"/>
    </location>
</feature>
<feature type="helix" evidence="17">
    <location>
        <begin position="100"/>
        <end position="102"/>
    </location>
</feature>
<feature type="strand" evidence="17">
    <location>
        <begin position="105"/>
        <end position="109"/>
    </location>
</feature>
<feature type="helix" evidence="17">
    <location>
        <begin position="115"/>
        <end position="127"/>
    </location>
</feature>
<feature type="strand" evidence="17">
    <location>
        <begin position="132"/>
        <end position="138"/>
    </location>
</feature>
<feature type="helix" evidence="17">
    <location>
        <begin position="139"/>
        <end position="146"/>
    </location>
</feature>
<feature type="strand" evidence="17">
    <location>
        <begin position="150"/>
        <end position="157"/>
    </location>
</feature>
<feature type="strand" evidence="17">
    <location>
        <begin position="162"/>
        <end position="168"/>
    </location>
</feature>
<feature type="helix" evidence="17">
    <location>
        <begin position="174"/>
        <end position="176"/>
    </location>
</feature>
<feature type="strand" evidence="17">
    <location>
        <begin position="178"/>
        <end position="181"/>
    </location>
</feature>
<feature type="helix" evidence="17">
    <location>
        <begin position="184"/>
        <end position="195"/>
    </location>
</feature>
<feature type="helix" evidence="17">
    <location>
        <begin position="196"/>
        <end position="198"/>
    </location>
</feature>
<feature type="helix" evidence="17">
    <location>
        <begin position="205"/>
        <end position="218"/>
    </location>
</feature>
<feature type="helix" evidence="17">
    <location>
        <begin position="225"/>
        <end position="234"/>
    </location>
</feature>
<feature type="strand" evidence="18">
    <location>
        <begin position="236"/>
        <end position="238"/>
    </location>
</feature>
<feature type="strand" evidence="17">
    <location>
        <begin position="240"/>
        <end position="243"/>
    </location>
</feature>
<feature type="strand" evidence="17">
    <location>
        <begin position="249"/>
        <end position="253"/>
    </location>
</feature>
<feature type="helix" evidence="17">
    <location>
        <begin position="255"/>
        <end position="264"/>
    </location>
</feature>
<feature type="helix" evidence="17">
    <location>
        <begin position="266"/>
        <end position="269"/>
    </location>
</feature>
<feature type="helix" evidence="17">
    <location>
        <begin position="276"/>
        <end position="285"/>
    </location>
</feature>
<feature type="helix" evidence="17">
    <location>
        <begin position="289"/>
        <end position="291"/>
    </location>
</feature>
<feature type="helix" evidence="17">
    <location>
        <begin position="292"/>
        <end position="296"/>
    </location>
</feature>
<feature type="strand" evidence="17">
    <location>
        <begin position="299"/>
        <end position="303"/>
    </location>
</feature>
<feature type="helix" evidence="17">
    <location>
        <begin position="304"/>
        <end position="307"/>
    </location>
</feature>
<feature type="helix" evidence="17">
    <location>
        <begin position="311"/>
        <end position="322"/>
    </location>
</feature>
<feature type="helix" evidence="17">
    <location>
        <begin position="337"/>
        <end position="339"/>
    </location>
</feature>
<feature type="helix" evidence="17">
    <location>
        <begin position="340"/>
        <end position="348"/>
    </location>
</feature>
<feature type="helix" evidence="17">
    <location>
        <begin position="352"/>
        <end position="356"/>
    </location>
</feature>
<feature type="strand" evidence="17">
    <location>
        <begin position="358"/>
        <end position="360"/>
    </location>
</feature>
<feature type="helix" evidence="17">
    <location>
        <begin position="361"/>
        <end position="367"/>
    </location>
</feature>
<feature type="helix" evidence="17">
    <location>
        <begin position="369"/>
        <end position="371"/>
    </location>
</feature>
<feature type="helix" evidence="17">
    <location>
        <begin position="372"/>
        <end position="375"/>
    </location>
</feature>
<name>ACTC_HUMAN</name>
<proteinExistence type="evidence at protein level"/>
<keyword id="KW-0002">3D-structure</keyword>
<keyword id="KW-0007">Acetylation</keyword>
<keyword id="KW-0067">ATP-binding</keyword>
<keyword id="KW-0976">Atrial septal defect</keyword>
<keyword id="KW-0122">Cardiomyopathy</keyword>
<keyword id="KW-0963">Cytoplasm</keyword>
<keyword id="KW-0206">Cytoskeleton</keyword>
<keyword id="KW-0225">Disease variant</keyword>
<keyword id="KW-0378">Hydrolase</keyword>
<keyword id="KW-1017">Isopeptide bond</keyword>
<keyword id="KW-0488">Methylation</keyword>
<keyword id="KW-0514">Muscle protein</keyword>
<keyword id="KW-0547">Nucleotide-binding</keyword>
<keyword id="KW-0558">Oxidation</keyword>
<keyword id="KW-1267">Proteomics identification</keyword>
<keyword id="KW-1185">Reference proteome</keyword>
<organism>
    <name type="scientific">Homo sapiens</name>
    <name type="common">Human</name>
    <dbReference type="NCBI Taxonomy" id="9606"/>
    <lineage>
        <taxon>Eukaryota</taxon>
        <taxon>Metazoa</taxon>
        <taxon>Chordata</taxon>
        <taxon>Craniata</taxon>
        <taxon>Vertebrata</taxon>
        <taxon>Euteleostomi</taxon>
        <taxon>Mammalia</taxon>
        <taxon>Eutheria</taxon>
        <taxon>Euarchontoglires</taxon>
        <taxon>Primates</taxon>
        <taxon>Haplorrhini</taxon>
        <taxon>Catarrhini</taxon>
        <taxon>Hominidae</taxon>
        <taxon>Homo</taxon>
    </lineage>
</organism>